<dbReference type="EMBL" id="U48249">
    <property type="protein sequence ID" value="AAC71216.2"/>
    <property type="molecule type" value="mRNA"/>
</dbReference>
<dbReference type="EMBL" id="U63740">
    <property type="protein sequence ID" value="AAB40630.1"/>
    <property type="molecule type" value="mRNA"/>
</dbReference>
<dbReference type="EMBL" id="BC087740">
    <property type="protein sequence ID" value="AAH87740.1"/>
    <property type="molecule type" value="mRNA"/>
</dbReference>
<dbReference type="RefSeq" id="NP_112328.1">
    <property type="nucleotide sequence ID" value="NM_031066.1"/>
</dbReference>
<dbReference type="RefSeq" id="XP_017451419.1">
    <property type="nucleotide sequence ID" value="XM_017595930.1"/>
</dbReference>
<dbReference type="RefSeq" id="XP_038938130.1">
    <property type="nucleotide sequence ID" value="XM_039082202.2"/>
</dbReference>
<dbReference type="BioGRID" id="249603">
    <property type="interactions" value="1"/>
</dbReference>
<dbReference type="FunCoup" id="P97577">
    <property type="interactions" value="2356"/>
</dbReference>
<dbReference type="STRING" id="10116.ENSRNOP00000008285"/>
<dbReference type="iPTMnet" id="P97577"/>
<dbReference type="PhosphoSitePlus" id="P97577"/>
<dbReference type="PaxDb" id="10116-ENSRNOP00000008285"/>
<dbReference type="Ensembl" id="ENSRNOT00000008285.4">
    <property type="protein sequence ID" value="ENSRNOP00000008285.3"/>
    <property type="gene ID" value="ENSRNOG00000006075.4"/>
</dbReference>
<dbReference type="GeneID" id="81730"/>
<dbReference type="KEGG" id="rno:81730"/>
<dbReference type="UCSC" id="RGD:619708">
    <property type="organism name" value="rat"/>
</dbReference>
<dbReference type="AGR" id="RGD:619708"/>
<dbReference type="CTD" id="9638"/>
<dbReference type="RGD" id="619708">
    <property type="gene designation" value="Fez1"/>
</dbReference>
<dbReference type="eggNOG" id="KOG3919">
    <property type="taxonomic scope" value="Eukaryota"/>
</dbReference>
<dbReference type="GeneTree" id="ENSGT00390000017627"/>
<dbReference type="HOGENOM" id="CLU_041596_0_0_1"/>
<dbReference type="InParanoid" id="P97577"/>
<dbReference type="OMA" id="MIGHHHG"/>
<dbReference type="OrthoDB" id="7959977at2759"/>
<dbReference type="PhylomeDB" id="P97577"/>
<dbReference type="TreeFam" id="TF313128"/>
<dbReference type="PRO" id="PR:P97577"/>
<dbReference type="Proteomes" id="UP000002494">
    <property type="component" value="Chromosome 8"/>
</dbReference>
<dbReference type="Bgee" id="ENSRNOG00000006075">
    <property type="expression patterns" value="Expressed in cerebellum and 17 other cell types or tissues"/>
</dbReference>
<dbReference type="GO" id="GO:0030424">
    <property type="term" value="C:axon"/>
    <property type="evidence" value="ECO:0000314"/>
    <property type="project" value="RGD"/>
</dbReference>
<dbReference type="GO" id="GO:0042995">
    <property type="term" value="C:cell projection"/>
    <property type="evidence" value="ECO:0000314"/>
    <property type="project" value="RGD"/>
</dbReference>
<dbReference type="GO" id="GO:0005813">
    <property type="term" value="C:centrosome"/>
    <property type="evidence" value="ECO:0000266"/>
    <property type="project" value="RGD"/>
</dbReference>
<dbReference type="GO" id="GO:0005737">
    <property type="term" value="C:cytoplasm"/>
    <property type="evidence" value="ECO:0000266"/>
    <property type="project" value="RGD"/>
</dbReference>
<dbReference type="GO" id="GO:0030425">
    <property type="term" value="C:dendrite"/>
    <property type="evidence" value="ECO:0000314"/>
    <property type="project" value="RGD"/>
</dbReference>
<dbReference type="GO" id="GO:0005794">
    <property type="term" value="C:Golgi apparatus"/>
    <property type="evidence" value="ECO:0000266"/>
    <property type="project" value="RGD"/>
</dbReference>
<dbReference type="GO" id="GO:0030426">
    <property type="term" value="C:growth cone"/>
    <property type="evidence" value="ECO:0000314"/>
    <property type="project" value="RGD"/>
</dbReference>
<dbReference type="GO" id="GO:0005874">
    <property type="term" value="C:microtubule"/>
    <property type="evidence" value="ECO:0007669"/>
    <property type="project" value="UniProtKB-KW"/>
</dbReference>
<dbReference type="GO" id="GO:0043025">
    <property type="term" value="C:neuronal cell body"/>
    <property type="evidence" value="ECO:0000314"/>
    <property type="project" value="RGD"/>
</dbReference>
<dbReference type="GO" id="GO:0005886">
    <property type="term" value="C:plasma membrane"/>
    <property type="evidence" value="ECO:0007669"/>
    <property type="project" value="UniProtKB-SubCell"/>
</dbReference>
<dbReference type="GO" id="GO:0043015">
    <property type="term" value="F:gamma-tubulin binding"/>
    <property type="evidence" value="ECO:0000266"/>
    <property type="project" value="RGD"/>
</dbReference>
<dbReference type="GO" id="GO:0005080">
    <property type="term" value="F:protein kinase C binding"/>
    <property type="evidence" value="ECO:0000353"/>
    <property type="project" value="RGD"/>
</dbReference>
<dbReference type="GO" id="GO:0071363">
    <property type="term" value="P:cellular response to growth factor stimulus"/>
    <property type="evidence" value="ECO:0000270"/>
    <property type="project" value="RGD"/>
</dbReference>
<dbReference type="GO" id="GO:0030010">
    <property type="term" value="P:establishment of cell polarity"/>
    <property type="evidence" value="ECO:0000315"/>
    <property type="project" value="RGD"/>
</dbReference>
<dbReference type="GO" id="GO:0051654">
    <property type="term" value="P:establishment of mitochondrion localization"/>
    <property type="evidence" value="ECO:0000315"/>
    <property type="project" value="RGD"/>
</dbReference>
<dbReference type="GO" id="GO:0021766">
    <property type="term" value="P:hippocampus development"/>
    <property type="evidence" value="ECO:0000270"/>
    <property type="project" value="RGD"/>
</dbReference>
<dbReference type="GO" id="GO:0007005">
    <property type="term" value="P:mitochondrion organization"/>
    <property type="evidence" value="ECO:0000315"/>
    <property type="project" value="RGD"/>
</dbReference>
<dbReference type="GO" id="GO:1902902">
    <property type="term" value="P:negative regulation of autophagosome assembly"/>
    <property type="evidence" value="ECO:0000250"/>
    <property type="project" value="GO_Central"/>
</dbReference>
<dbReference type="GO" id="GO:0061881">
    <property type="term" value="P:positive regulation of anterograde axonal transport of mitochondrion"/>
    <property type="evidence" value="ECO:0000315"/>
    <property type="project" value="RGD"/>
</dbReference>
<dbReference type="GO" id="GO:0010976">
    <property type="term" value="P:positive regulation of neuron projection development"/>
    <property type="evidence" value="ECO:0000315"/>
    <property type="project" value="RGD"/>
</dbReference>
<dbReference type="InterPro" id="IPR011680">
    <property type="entry name" value="FEZ"/>
</dbReference>
<dbReference type="PANTHER" id="PTHR12394:SF4">
    <property type="entry name" value="FASCICULATION AND ELONGATION PROTEIN ZETA-1"/>
    <property type="match status" value="1"/>
</dbReference>
<dbReference type="PANTHER" id="PTHR12394">
    <property type="entry name" value="ZYGIN"/>
    <property type="match status" value="1"/>
</dbReference>
<dbReference type="Pfam" id="PF07763">
    <property type="entry name" value="FEZ"/>
    <property type="match status" value="1"/>
</dbReference>
<organism>
    <name type="scientific">Rattus norvegicus</name>
    <name type="common">Rat</name>
    <dbReference type="NCBI Taxonomy" id="10116"/>
    <lineage>
        <taxon>Eukaryota</taxon>
        <taxon>Metazoa</taxon>
        <taxon>Chordata</taxon>
        <taxon>Craniata</taxon>
        <taxon>Vertebrata</taxon>
        <taxon>Euteleostomi</taxon>
        <taxon>Mammalia</taxon>
        <taxon>Eutheria</taxon>
        <taxon>Euarchontoglires</taxon>
        <taxon>Glires</taxon>
        <taxon>Rodentia</taxon>
        <taxon>Myomorpha</taxon>
        <taxon>Muroidea</taxon>
        <taxon>Muridae</taxon>
        <taxon>Murinae</taxon>
        <taxon>Rattus</taxon>
    </lineage>
</organism>
<keyword id="KW-1003">Cell membrane</keyword>
<keyword id="KW-0175">Coiled coil</keyword>
<keyword id="KW-0963">Cytoplasm</keyword>
<keyword id="KW-0206">Cytoskeleton</keyword>
<keyword id="KW-0472">Membrane</keyword>
<keyword id="KW-0493">Microtubule</keyword>
<keyword id="KW-0597">Phosphoprotein</keyword>
<keyword id="KW-1185">Reference proteome</keyword>
<keyword id="KW-0813">Transport</keyword>
<keyword id="KW-0832">Ubl conjugation</keyword>
<feature type="chain" id="PRO_0000189527" description="Fasciculation and elongation protein zeta-1">
    <location>
        <begin position="1"/>
        <end position="393"/>
    </location>
</feature>
<feature type="region of interest" description="Disordered" evidence="4">
    <location>
        <begin position="1"/>
        <end position="41"/>
    </location>
</feature>
<feature type="region of interest" description="Disordered" evidence="4">
    <location>
        <begin position="130"/>
        <end position="154"/>
    </location>
</feature>
<feature type="coiled-coil region" evidence="3">
    <location>
        <begin position="231"/>
        <end position="299"/>
    </location>
</feature>
<feature type="modified residue" description="Phosphoserine" evidence="9">
    <location>
        <position position="58"/>
    </location>
</feature>
<feature type="modified residue" description="Phosphoserine" evidence="9">
    <location>
        <position position="299"/>
    </location>
</feature>
<feature type="modified residue" description="Phosphoserine" evidence="2">
    <location>
        <position position="317"/>
    </location>
</feature>
<evidence type="ECO:0000250" key="1"/>
<evidence type="ECO:0000250" key="2">
    <source>
        <dbReference type="UniProtKB" id="Q8K0X8"/>
    </source>
</evidence>
<evidence type="ECO:0000255" key="3"/>
<evidence type="ECO:0000256" key="4">
    <source>
        <dbReference type="SAM" id="MobiDB-lite"/>
    </source>
</evidence>
<evidence type="ECO:0000269" key="5">
    <source>
    </source>
</evidence>
<evidence type="ECO:0000269" key="6">
    <source>
    </source>
</evidence>
<evidence type="ECO:0000269" key="7">
    <source>
    </source>
</evidence>
<evidence type="ECO:0000305" key="8"/>
<evidence type="ECO:0007744" key="9">
    <source>
    </source>
</evidence>
<comment type="function">
    <text evidence="5 6">May be involved in axonal outgrowth as component of the network of molecules that regulate cellular morphology and axon guidance machinery. May participate in the transport of mitochondria and other cargos along microtubules.</text>
</comment>
<comment type="subunit">
    <text evidence="1">Homodimer. Interacts with UBE4B and SAP30L (By similarity). Interacts with SCOC and ULK1; SCOC interferes with ULK1-binding to FEZ1 (By similarity). Directly interacts with SCOC and UVRAG. Stabilizes the interaction between SCOC and UVRAG during amino acid starvation (By similarity). Interacts with the NH2-terminal variable region (V1) of PKC zeta and weakly with that of PKC epsilon.</text>
</comment>
<comment type="subcellular location">
    <subcellularLocation>
        <location evidence="1">Cytoplasm</location>
        <location evidence="1">Cytoskeleton</location>
        <location evidence="1">Microtubule organizing center</location>
        <location evidence="1">Centrosome</location>
    </subcellularLocation>
    <subcellularLocation>
        <location>Cell membrane</location>
    </subcellularLocation>
    <text evidence="1">Colocalizes with both, alpha- and gamma-tubulin (By similarity). Translocated from the plasma membrane to the cytoplasm by activation of the PKC zeta.</text>
</comment>
<comment type="tissue specificity">
    <text>Brain.</text>
</comment>
<comment type="PTM">
    <text evidence="7">Phosphorylated by protein kinase C zeta; which enhances interaction with UBE4B and polyubiquitination.</text>
</comment>
<comment type="PTM">
    <text evidence="1">Polyubiquitinated in a UBE4B-dependent manner; which does not lead to proteasomal degradation and may be important for neurogenic activity. Polyubiquitin linkage seems to be mainly through Lys-26 (By similarity).</text>
</comment>
<comment type="similarity">
    <text evidence="8">Belongs to the zygin family.</text>
</comment>
<sequence length="393" mass="45244">MEAPLVSLDEEFEDIRPCCTEDPEEKPQSLYGTSPHHLEDPSLSELENFSSEIISFKSMEDLVNEFDEKLNVCFRNYNAKTENLAPVKNQLQIQEEEETLRDEEVWDALTDNYIPSLSEDWRDPNIEALNGNSSDTEIHEKEEEDEFIEKSENDSGINEEPLLTADQVIEEIEEMMQNSPDPEEEVEVLEEEDGGEISSQADSVLLQEMQALTQTFNNNWSYEGLRHMSGSELTELLDQVEGAIRDFSEELVHQLARRDELEFEKEVKNSFITVLIEVQNKQKEQRELMKKRRKEKGLSLQSSRIEKGNQMPLKRFSMEGISNILQSGIRQTFGSSGADRQYLNTVIPYEKKSSPPSVEDLQMLTNILFAMKEDNEKVPTLLTDYILKVLCPT</sequence>
<protein>
    <recommendedName>
        <fullName>Fasciculation and elongation protein zeta-1</fullName>
    </recommendedName>
    <alternativeName>
        <fullName>Zygin I</fullName>
    </alternativeName>
    <alternativeName>
        <fullName>Zygin-1</fullName>
    </alternativeName>
</protein>
<accession>P97577</accession>
<accession>Q62922</accession>
<gene>
    <name type="primary">Fez1</name>
</gene>
<proteinExistence type="evidence at protein level"/>
<name>FEZ1_RAT</name>
<reference key="1">
    <citation type="journal article" date="1999" name="J. Cell Biol.">
        <title>Mammalian homologue of the Caenorhabditis elegans UNC-76 protein involved in axonal outgrowth is a protein kinase C zeta-interacting protein.</title>
        <authorList>
            <person name="Kuroda S."/>
            <person name="Nakagawa N."/>
            <person name="Tokunaga C."/>
            <person name="Tatematsu K."/>
            <person name="Tanizawa K."/>
        </authorList>
    </citation>
    <scope>NUCLEOTIDE SEQUENCE [MRNA]</scope>
    <scope>PHOSPHORYLATION</scope>
    <source>
        <strain>Sprague-Dawley</strain>
        <tissue>Brain</tissue>
    </source>
</reference>
<reference key="2">
    <citation type="submission" date="1996-07" db="EMBL/GenBank/DDBJ databases">
        <title>Zigins: a family of synaptotagmin-interacting proteins related to unc-76.</title>
        <authorList>
            <person name="Sugita S."/>
            <person name="von Poser C."/>
            <person name="Rosahl T.W."/>
            <person name="Hata Y."/>
            <person name="Suedhof T.C."/>
        </authorList>
    </citation>
    <scope>NUCLEOTIDE SEQUENCE [MRNA]</scope>
    <source>
        <tissue>Brain</tissue>
    </source>
</reference>
<reference key="3">
    <citation type="journal article" date="2004" name="Genome Res.">
        <title>The status, quality, and expansion of the NIH full-length cDNA project: the Mammalian Gene Collection (MGC).</title>
        <authorList>
            <consortium name="The MGC Project Team"/>
        </authorList>
    </citation>
    <scope>NUCLEOTIDE SEQUENCE [LARGE SCALE MRNA]</scope>
    <source>
        <tissue>Brain</tissue>
    </source>
</reference>
<reference key="4">
    <citation type="journal article" date="2007" name="Biochem. Biophys. Res. Commun.">
        <title>Fasciculation and elongation protein zeta-1 (FEZ1) participates in the polarization of hippocampal neuron by controlling the mitochondrial motility.</title>
        <authorList>
            <person name="Ikuta J."/>
            <person name="Maturana A."/>
            <person name="Fujita T."/>
            <person name="Okajima T."/>
            <person name="Tatematsu K."/>
            <person name="Tanizawa K."/>
            <person name="Kuroda S."/>
        </authorList>
    </citation>
    <scope>FUNCTION</scope>
</reference>
<reference key="5">
    <citation type="journal article" date="2007" name="Biochem. Biophys. Res. Commun.">
        <title>Axonal guidance protein FEZ1 associates with tubulin and kinesin motor protein to transport mitochondria in neurites of NGF-stimulated PC12 cells.</title>
        <authorList>
            <person name="Fujita T."/>
            <person name="Maturana A.D."/>
            <person name="Ikuta J."/>
            <person name="Hamada J."/>
            <person name="Walchli S."/>
            <person name="Suzuki T."/>
            <person name="Sawa H."/>
            <person name="Wooten M.W."/>
            <person name="Okajima T."/>
            <person name="Tatematsu K."/>
            <person name="Tanizawa K."/>
            <person name="Kuroda S."/>
        </authorList>
    </citation>
    <scope>FUNCTION</scope>
</reference>
<reference key="6">
    <citation type="journal article" date="2012" name="Nat. Commun.">
        <title>Quantitative maps of protein phosphorylation sites across 14 different rat organs and tissues.</title>
        <authorList>
            <person name="Lundby A."/>
            <person name="Secher A."/>
            <person name="Lage K."/>
            <person name="Nordsborg N.B."/>
            <person name="Dmytriyev A."/>
            <person name="Lundby C."/>
            <person name="Olsen J.V."/>
        </authorList>
    </citation>
    <scope>PHOSPHORYLATION [LARGE SCALE ANALYSIS] AT SER-58 AND SER-299</scope>
    <scope>IDENTIFICATION BY MASS SPECTROMETRY [LARGE SCALE ANALYSIS]</scope>
</reference>